<comment type="function">
    <text>Mitochondrial membrane ATP synthase (F(1)F(0) ATP synthase or Complex V) produces ATP from ADP in the presence of a proton gradient across the membrane which is generated by electron transport complexes of the respiratory chain. F-type ATPases consist of two structural domains, F(1) - containing the extramembraneous catalytic core and F(0) - containing the membrane proton channel, linked together by a central stalk and a peripheral stalk. During catalysis, ATP synthesis in the catalytic domain of F(1) is coupled via a rotary mechanism of the central stalk subunits to proton translocation. Key component of the proton channel; it may play a direct role in the translocation of protons across the membrane.</text>
</comment>
<comment type="subunit">
    <text>F-type ATPases have 2 components, CF(1) - the catalytic core - and CF(0) - the membrane proton channel. CF(1) has five subunits: alpha(3), beta(3), gamma(1), delta(1), epsilon(1). CF(0) has three main subunits: a, b and c.</text>
</comment>
<comment type="subcellular location">
    <subcellularLocation>
        <location>Mitochondrion inner membrane</location>
        <topology>Multi-pass membrane protein</topology>
    </subcellularLocation>
</comment>
<comment type="similarity">
    <text evidence="2">Belongs to the ATPase A chain family.</text>
</comment>
<evidence type="ECO:0000255" key="1"/>
<evidence type="ECO:0000305" key="2"/>
<protein>
    <recommendedName>
        <fullName>ATP synthase subunit a</fullName>
    </recommendedName>
    <alternativeName>
        <fullName>F-ATPase protein 6</fullName>
    </alternativeName>
</protein>
<gene>
    <name type="primary">atp6</name>
</gene>
<name>ATP6_ASPAM</name>
<feature type="chain" id="PRO_0000082090" description="ATP synthase subunit a">
    <location>
        <begin position="1"/>
        <end position="78" status="greater than"/>
    </location>
</feature>
<feature type="transmembrane region" description="Helical" evidence="1">
    <location>
        <begin position="34"/>
        <end position="54"/>
    </location>
</feature>
<feature type="non-terminal residue">
    <location>
        <position position="78"/>
    </location>
</feature>
<geneLocation type="mitochondrion"/>
<dbReference type="PIR" id="A01055">
    <property type="entry name" value="PWAS6M"/>
</dbReference>
<dbReference type="SMR" id="P00853"/>
<dbReference type="GO" id="GO:0005743">
    <property type="term" value="C:mitochondrial inner membrane"/>
    <property type="evidence" value="ECO:0007669"/>
    <property type="project" value="UniProtKB-SubCell"/>
</dbReference>
<dbReference type="GO" id="GO:0045259">
    <property type="term" value="C:proton-transporting ATP synthase complex"/>
    <property type="evidence" value="ECO:0007669"/>
    <property type="project" value="UniProtKB-KW"/>
</dbReference>
<dbReference type="GO" id="GO:0046933">
    <property type="term" value="F:proton-transporting ATP synthase activity, rotational mechanism"/>
    <property type="evidence" value="ECO:0007669"/>
    <property type="project" value="TreeGrafter"/>
</dbReference>
<dbReference type="InterPro" id="IPR045083">
    <property type="entry name" value="ATP_synth_F0_asu_bact/mt"/>
</dbReference>
<dbReference type="PANTHER" id="PTHR11410">
    <property type="entry name" value="ATP SYNTHASE SUBUNIT A"/>
    <property type="match status" value="1"/>
</dbReference>
<dbReference type="PANTHER" id="PTHR11410:SF0">
    <property type="entry name" value="ATP SYNTHASE SUBUNIT A"/>
    <property type="match status" value="1"/>
</dbReference>
<sequence>MGNLNFVLSPLDQFEVRDLLSINANLLGNFHLSLTNIGLYLTIGIFLILTYSLLATNNNKIIPNNWSISQESIYATVH</sequence>
<organism>
    <name type="scientific">Aspergillus amstelodami</name>
    <dbReference type="NCBI Taxonomy" id="5054"/>
    <lineage>
        <taxon>Eukaryota</taxon>
        <taxon>Fungi</taxon>
        <taxon>Dikarya</taxon>
        <taxon>Ascomycota</taxon>
        <taxon>Pezizomycotina</taxon>
        <taxon>Eurotiomycetes</taxon>
        <taxon>Eurotiomycetidae</taxon>
        <taxon>Eurotiales</taxon>
        <taxon>Aspergillaceae</taxon>
        <taxon>Aspergillus</taxon>
        <taxon>Aspergillus subgen. Aspergillus</taxon>
    </lineage>
</organism>
<reference key="1">
    <citation type="submission" date="1984-03" db="PIR data bank">
        <authorList>
            <person name="Lazarus C.M."/>
            <person name="Kuntzel H."/>
        </authorList>
    </citation>
    <scope>NUCLEOTIDE SEQUENCE [GENOMIC DNA]</scope>
</reference>
<proteinExistence type="inferred from homology"/>
<accession>P00853</accession>
<keyword id="KW-0066">ATP synthesis</keyword>
<keyword id="KW-0138">CF(0)</keyword>
<keyword id="KW-0375">Hydrogen ion transport</keyword>
<keyword id="KW-0406">Ion transport</keyword>
<keyword id="KW-0472">Membrane</keyword>
<keyword id="KW-0496">Mitochondrion</keyword>
<keyword id="KW-0999">Mitochondrion inner membrane</keyword>
<keyword id="KW-0812">Transmembrane</keyword>
<keyword id="KW-1133">Transmembrane helix</keyword>
<keyword id="KW-0813">Transport</keyword>